<name>YGGU_ECO57</name>
<proteinExistence type="evidence at protein level"/>
<evidence type="ECO:0000255" key="1">
    <source>
        <dbReference type="HAMAP-Rule" id="MF_00634"/>
    </source>
</evidence>
<evidence type="ECO:0000305" key="2"/>
<evidence type="ECO:0007829" key="3">
    <source>
        <dbReference type="PDB" id="1N91"/>
    </source>
</evidence>
<evidence type="ECO:0007829" key="4">
    <source>
        <dbReference type="PDB" id="1YH5"/>
    </source>
</evidence>
<feature type="chain" id="PRO_0000139443" description="UPF0235 protein YggU">
    <location>
        <begin position="1"/>
        <end position="96"/>
    </location>
</feature>
<feature type="strand" evidence="3">
    <location>
        <begin position="3"/>
        <end position="6"/>
    </location>
</feature>
<feature type="strand" evidence="3">
    <location>
        <begin position="8"/>
        <end position="18"/>
    </location>
</feature>
<feature type="strand" evidence="3">
    <location>
        <begin position="20"/>
        <end position="23"/>
    </location>
</feature>
<feature type="strand" evidence="3">
    <location>
        <begin position="25"/>
        <end position="29"/>
    </location>
</feature>
<feature type="strand" evidence="3">
    <location>
        <begin position="34"/>
        <end position="37"/>
    </location>
</feature>
<feature type="strand" evidence="4">
    <location>
        <begin position="38"/>
        <end position="40"/>
    </location>
</feature>
<feature type="helix" evidence="3">
    <location>
        <begin position="44"/>
        <end position="58"/>
    </location>
</feature>
<feature type="turn" evidence="3">
    <location>
        <begin position="63"/>
        <end position="65"/>
    </location>
</feature>
<feature type="strand" evidence="3">
    <location>
        <begin position="66"/>
        <end position="70"/>
    </location>
</feature>
<feature type="strand" evidence="3">
    <location>
        <begin position="74"/>
        <end position="83"/>
    </location>
</feature>
<feature type="helix" evidence="3">
    <location>
        <begin position="89"/>
        <end position="92"/>
    </location>
</feature>
<feature type="turn" evidence="3">
    <location>
        <begin position="93"/>
        <end position="96"/>
    </location>
</feature>
<reference key="1">
    <citation type="journal article" date="2001" name="Nature">
        <title>Genome sequence of enterohaemorrhagic Escherichia coli O157:H7.</title>
        <authorList>
            <person name="Perna N.T."/>
            <person name="Plunkett G. III"/>
            <person name="Burland V."/>
            <person name="Mau B."/>
            <person name="Glasner J.D."/>
            <person name="Rose D.J."/>
            <person name="Mayhew G.F."/>
            <person name="Evans P.S."/>
            <person name="Gregor J."/>
            <person name="Kirkpatrick H.A."/>
            <person name="Posfai G."/>
            <person name="Hackett J."/>
            <person name="Klink S."/>
            <person name="Boutin A."/>
            <person name="Shao Y."/>
            <person name="Miller L."/>
            <person name="Grotbeck E.J."/>
            <person name="Davis N.W."/>
            <person name="Lim A."/>
            <person name="Dimalanta E.T."/>
            <person name="Potamousis K."/>
            <person name="Apodaca J."/>
            <person name="Anantharaman T.S."/>
            <person name="Lin J."/>
            <person name="Yen G."/>
            <person name="Schwartz D.C."/>
            <person name="Welch R.A."/>
            <person name="Blattner F.R."/>
        </authorList>
    </citation>
    <scope>NUCLEOTIDE SEQUENCE [LARGE SCALE GENOMIC DNA]</scope>
    <source>
        <strain>O157:H7 / EDL933 / ATCC 700927 / EHEC</strain>
    </source>
</reference>
<reference key="2">
    <citation type="journal article" date="2001" name="DNA Res.">
        <title>Complete genome sequence of enterohemorrhagic Escherichia coli O157:H7 and genomic comparison with a laboratory strain K-12.</title>
        <authorList>
            <person name="Hayashi T."/>
            <person name="Makino K."/>
            <person name="Ohnishi M."/>
            <person name="Kurokawa K."/>
            <person name="Ishii K."/>
            <person name="Yokoyama K."/>
            <person name="Han C.-G."/>
            <person name="Ohtsubo E."/>
            <person name="Nakayama K."/>
            <person name="Murata T."/>
            <person name="Tanaka M."/>
            <person name="Tobe T."/>
            <person name="Iida T."/>
            <person name="Takami H."/>
            <person name="Honda T."/>
            <person name="Sasakawa C."/>
            <person name="Ogasawara N."/>
            <person name="Yasunaga T."/>
            <person name="Kuhara S."/>
            <person name="Shiba T."/>
            <person name="Hattori M."/>
            <person name="Shinagawa H."/>
        </authorList>
    </citation>
    <scope>NUCLEOTIDE SEQUENCE [LARGE SCALE GENOMIC DNA]</scope>
    <source>
        <strain>O157:H7 / Sakai / RIMD 0509952 / EHEC</strain>
    </source>
</reference>
<dbReference type="EMBL" id="AE005174">
    <property type="protein sequence ID" value="AAG58084.1"/>
    <property type="status" value="ALT_INIT"/>
    <property type="molecule type" value="Genomic_DNA"/>
</dbReference>
<dbReference type="EMBL" id="BA000007">
    <property type="protein sequence ID" value="BAB37252.1"/>
    <property type="status" value="ALT_INIT"/>
    <property type="molecule type" value="Genomic_DNA"/>
</dbReference>
<dbReference type="PIR" id="E91107">
    <property type="entry name" value="E91107"/>
</dbReference>
<dbReference type="PIR" id="H85952">
    <property type="entry name" value="H85952"/>
</dbReference>
<dbReference type="RefSeq" id="NP_311856.2">
    <property type="nucleotide sequence ID" value="NC_002695.1"/>
</dbReference>
<dbReference type="RefSeq" id="WP_001277224.1">
    <property type="nucleotide sequence ID" value="NZ_VOAI01000003.1"/>
</dbReference>
<dbReference type="PDB" id="1N91">
    <property type="method" value="NMR"/>
    <property type="chains" value="A=1-96"/>
</dbReference>
<dbReference type="PDB" id="1YH5">
    <property type="method" value="NMR"/>
    <property type="chains" value="A=1-96"/>
</dbReference>
<dbReference type="PDBsum" id="1N91"/>
<dbReference type="PDBsum" id="1YH5"/>
<dbReference type="SMR" id="Q8XCU6"/>
<dbReference type="STRING" id="155864.Z4298"/>
<dbReference type="GeneID" id="916346"/>
<dbReference type="KEGG" id="ece:Z4298"/>
<dbReference type="KEGG" id="ecs:ECs_3829"/>
<dbReference type="PATRIC" id="fig|386585.9.peg.3995"/>
<dbReference type="eggNOG" id="COG1872">
    <property type="taxonomic scope" value="Bacteria"/>
</dbReference>
<dbReference type="HOGENOM" id="CLU_130694_5_0_6"/>
<dbReference type="OMA" id="AANKQCV"/>
<dbReference type="EvolutionaryTrace" id="Q8XCU6"/>
<dbReference type="Proteomes" id="UP000000558">
    <property type="component" value="Chromosome"/>
</dbReference>
<dbReference type="Proteomes" id="UP000002519">
    <property type="component" value="Chromosome"/>
</dbReference>
<dbReference type="GO" id="GO:0005737">
    <property type="term" value="C:cytoplasm"/>
    <property type="evidence" value="ECO:0007669"/>
    <property type="project" value="TreeGrafter"/>
</dbReference>
<dbReference type="Gene3D" id="3.30.1200.10">
    <property type="entry name" value="YggU-like"/>
    <property type="match status" value="1"/>
</dbReference>
<dbReference type="HAMAP" id="MF_00634">
    <property type="entry name" value="UPF0235"/>
    <property type="match status" value="1"/>
</dbReference>
<dbReference type="InterPro" id="IPR003746">
    <property type="entry name" value="DUF167"/>
</dbReference>
<dbReference type="InterPro" id="IPR036591">
    <property type="entry name" value="YggU-like_sf"/>
</dbReference>
<dbReference type="NCBIfam" id="TIGR00251">
    <property type="entry name" value="DUF167 family protein"/>
    <property type="match status" value="1"/>
</dbReference>
<dbReference type="NCBIfam" id="NF003466">
    <property type="entry name" value="PRK05090.1"/>
    <property type="match status" value="1"/>
</dbReference>
<dbReference type="PANTHER" id="PTHR13420">
    <property type="entry name" value="UPF0235 PROTEIN C15ORF40"/>
    <property type="match status" value="1"/>
</dbReference>
<dbReference type="PANTHER" id="PTHR13420:SF7">
    <property type="entry name" value="UPF0235 PROTEIN C15ORF40"/>
    <property type="match status" value="1"/>
</dbReference>
<dbReference type="Pfam" id="PF02594">
    <property type="entry name" value="DUF167"/>
    <property type="match status" value="1"/>
</dbReference>
<dbReference type="SMART" id="SM01152">
    <property type="entry name" value="DUF167"/>
    <property type="match status" value="1"/>
</dbReference>
<dbReference type="SUPFAM" id="SSF69786">
    <property type="entry name" value="YggU-like"/>
    <property type="match status" value="1"/>
</dbReference>
<organism>
    <name type="scientific">Escherichia coli O157:H7</name>
    <dbReference type="NCBI Taxonomy" id="83334"/>
    <lineage>
        <taxon>Bacteria</taxon>
        <taxon>Pseudomonadati</taxon>
        <taxon>Pseudomonadota</taxon>
        <taxon>Gammaproteobacteria</taxon>
        <taxon>Enterobacterales</taxon>
        <taxon>Enterobacteriaceae</taxon>
        <taxon>Escherichia</taxon>
    </lineage>
</organism>
<comment type="similarity">
    <text evidence="1">Belongs to the UPF0235 family.</text>
</comment>
<comment type="sequence caution" evidence="2">
    <conflict type="erroneous initiation">
        <sequence resource="EMBL-CDS" id="AAG58084"/>
    </conflict>
</comment>
<comment type="sequence caution" evidence="2">
    <conflict type="erroneous initiation">
        <sequence resource="EMBL-CDS" id="BAB37252"/>
    </conflict>
</comment>
<gene>
    <name evidence="1" type="primary">yggU</name>
    <name type="ordered locus">Z4298</name>
    <name type="ordered locus">ECs3829</name>
</gene>
<protein>
    <recommendedName>
        <fullName evidence="1">UPF0235 protein YggU</fullName>
    </recommendedName>
</protein>
<sequence length="96" mass="10415">MSAVTVNDDGLVLRLYIQPKASRDSIVGLHGDEVKVAITAPPVDGQANSHLVKFLGKQFRVAKSQVVIEKGELGRHKQIKIINPQQIPPEVAALIN</sequence>
<keyword id="KW-0002">3D-structure</keyword>
<keyword id="KW-1185">Reference proteome</keyword>
<accession>Q8XCU6</accession>